<keyword id="KW-1003">Cell membrane</keyword>
<keyword id="KW-0472">Membrane</keyword>
<keyword id="KW-0677">Repeat</keyword>
<keyword id="KW-0812">Transmembrane</keyword>
<keyword id="KW-1133">Transmembrane helix</keyword>
<keyword id="KW-0813">Transport</keyword>
<proteinExistence type="inferred from homology"/>
<protein>
    <recommendedName>
        <fullName evidence="1">Putative transport protein YbjL</fullName>
    </recommendedName>
</protein>
<accession>B1IWS5</accession>
<gene>
    <name evidence="1" type="primary">ybjL</name>
    <name type="ordered locus">EcolC_2749</name>
</gene>
<sequence>MNINVAELLNGNYILLLFVVLALGLCLGKLRLGSIQLGNSIGVLVVSLLLGQQHFSINTDALNLGFMLFIFCVGVEAGPNFFSIFFRDGKNYLMLALVMVGSALVIALGLGKLFGWDIGLTAGMLAGSMTSTPVLVGAGDTLRHSGMESRQLSLALDNLSLGYALTYLIGLVSLIVGARYLPKLQHQDLQTSAQQIARERGLDTDANRKVYLPVIRAYRVGPELVAWTDGKNLRELGIYRQTGCYIERIRRNGILANPDGDAVLQMGDEIALVGYPDAHARLDPSFRNGKEVFDRDLLDMRIVTEEVVVKNHNAVGKRLAQLKLTDHGCFLNRVIRSQIEMPIDDNVVLNKGDVLQVSGDARRVKTIADRIGFISIHSQVTDLLAFCAFFVIGLMIGMITFQFSTFSFGMGNAAGLLFAGIMLGFMRANHPTFGYIPQGALSMVKEFGLMVFMAGVGLSAGSGINNGLGAIGGQMLIAGLIVSLVPVVICFLFGAYVLRMNRALLFGAMMGARTCAPAMEIISDTARSNIPALGYAGTYAIANVLLTLAGTIIVMVWPGLG</sequence>
<feature type="chain" id="PRO_1000084120" description="Putative transport protein YbjL">
    <location>
        <begin position="1"/>
        <end position="561"/>
    </location>
</feature>
<feature type="transmembrane region" description="Helical" evidence="1">
    <location>
        <begin position="8"/>
        <end position="28"/>
    </location>
</feature>
<feature type="transmembrane region" description="Helical" evidence="1">
    <location>
        <begin position="32"/>
        <end position="52"/>
    </location>
</feature>
<feature type="transmembrane region" description="Helical" evidence="1">
    <location>
        <begin position="66"/>
        <end position="86"/>
    </location>
</feature>
<feature type="transmembrane region" description="Helical" evidence="1">
    <location>
        <begin position="94"/>
        <end position="114"/>
    </location>
</feature>
<feature type="transmembrane region" description="Helical" evidence="1">
    <location>
        <begin position="158"/>
        <end position="178"/>
    </location>
</feature>
<feature type="transmembrane region" description="Helical" evidence="1">
    <location>
        <begin position="383"/>
        <end position="403"/>
    </location>
</feature>
<feature type="transmembrane region" description="Helical" evidence="1">
    <location>
        <begin position="406"/>
        <end position="426"/>
    </location>
</feature>
<feature type="transmembrane region" description="Helical" evidence="1">
    <location>
        <begin position="451"/>
        <end position="471"/>
    </location>
</feature>
<feature type="transmembrane region" description="Helical" evidence="1">
    <location>
        <begin position="475"/>
        <end position="495"/>
    </location>
</feature>
<feature type="transmembrane region" description="Helical" evidence="1">
    <location>
        <begin position="540"/>
        <end position="560"/>
    </location>
</feature>
<feature type="domain" description="RCK C-terminal 1" evidence="1">
    <location>
        <begin position="200"/>
        <end position="288"/>
    </location>
</feature>
<feature type="domain" description="RCK C-terminal 2" evidence="1">
    <location>
        <begin position="292"/>
        <end position="373"/>
    </location>
</feature>
<name>YBJL_ECOLC</name>
<comment type="subcellular location">
    <subcellularLocation>
        <location evidence="1">Cell membrane</location>
        <topology evidence="1">Multi-pass membrane protein</topology>
    </subcellularLocation>
</comment>
<comment type="similarity">
    <text evidence="1">Belongs to the AAE transporter (TC 2.A.81) family. YbjL subfamily.</text>
</comment>
<dbReference type="EMBL" id="CP000946">
    <property type="protein sequence ID" value="ACA78377.1"/>
    <property type="molecule type" value="Genomic_DNA"/>
</dbReference>
<dbReference type="RefSeq" id="WP_001024876.1">
    <property type="nucleotide sequence ID" value="NZ_MTFT01000046.1"/>
</dbReference>
<dbReference type="SMR" id="B1IWS5"/>
<dbReference type="KEGG" id="ecl:EcolC_2749"/>
<dbReference type="HOGENOM" id="CLU_035023_2_2_6"/>
<dbReference type="GO" id="GO:0005886">
    <property type="term" value="C:plasma membrane"/>
    <property type="evidence" value="ECO:0007669"/>
    <property type="project" value="UniProtKB-SubCell"/>
</dbReference>
<dbReference type="GO" id="GO:0008324">
    <property type="term" value="F:monoatomic cation transmembrane transporter activity"/>
    <property type="evidence" value="ECO:0007669"/>
    <property type="project" value="InterPro"/>
</dbReference>
<dbReference type="GO" id="GO:0006813">
    <property type="term" value="P:potassium ion transport"/>
    <property type="evidence" value="ECO:0007669"/>
    <property type="project" value="InterPro"/>
</dbReference>
<dbReference type="FunFam" id="3.30.70.1450:FF:000003">
    <property type="entry name" value="Putative transport protein YbjL"/>
    <property type="match status" value="1"/>
</dbReference>
<dbReference type="Gene3D" id="3.30.70.1450">
    <property type="entry name" value="Regulator of K+ conductance, C-terminal domain"/>
    <property type="match status" value="2"/>
</dbReference>
<dbReference type="HAMAP" id="MF_01015">
    <property type="entry name" value="YbjL"/>
    <property type="match status" value="1"/>
</dbReference>
<dbReference type="InterPro" id="IPR050144">
    <property type="entry name" value="AAE_transporter"/>
</dbReference>
<dbReference type="InterPro" id="IPR006037">
    <property type="entry name" value="RCK_C"/>
</dbReference>
<dbReference type="InterPro" id="IPR036721">
    <property type="entry name" value="RCK_C_sf"/>
</dbReference>
<dbReference type="InterPro" id="IPR023017">
    <property type="entry name" value="Transp_YbjL_put"/>
</dbReference>
<dbReference type="InterPro" id="IPR006512">
    <property type="entry name" value="YidE_YbjL"/>
</dbReference>
<dbReference type="NCBIfam" id="NF003440">
    <property type="entry name" value="PRK04972.1"/>
    <property type="match status" value="1"/>
</dbReference>
<dbReference type="NCBIfam" id="TIGR01625">
    <property type="entry name" value="YidE_YbjL_dupl"/>
    <property type="match status" value="2"/>
</dbReference>
<dbReference type="PANTHER" id="PTHR30445">
    <property type="entry name" value="K(+)_H(+) ANTIPORTER SUBUNIT KHTT"/>
    <property type="match status" value="1"/>
</dbReference>
<dbReference type="PANTHER" id="PTHR30445:SF10">
    <property type="entry name" value="TRANSPORT PROTEIN YBJL-RELATED"/>
    <property type="match status" value="1"/>
</dbReference>
<dbReference type="Pfam" id="PF06826">
    <property type="entry name" value="Asp-Al_Ex"/>
    <property type="match status" value="2"/>
</dbReference>
<dbReference type="Pfam" id="PF02080">
    <property type="entry name" value="TrkA_C"/>
    <property type="match status" value="2"/>
</dbReference>
<dbReference type="SUPFAM" id="SSF116726">
    <property type="entry name" value="TrkA C-terminal domain-like"/>
    <property type="match status" value="2"/>
</dbReference>
<dbReference type="PROSITE" id="PS51202">
    <property type="entry name" value="RCK_C"/>
    <property type="match status" value="2"/>
</dbReference>
<evidence type="ECO:0000255" key="1">
    <source>
        <dbReference type="HAMAP-Rule" id="MF_01015"/>
    </source>
</evidence>
<reference key="1">
    <citation type="submission" date="2008-02" db="EMBL/GenBank/DDBJ databases">
        <title>Complete sequence of Escherichia coli C str. ATCC 8739.</title>
        <authorList>
            <person name="Copeland A."/>
            <person name="Lucas S."/>
            <person name="Lapidus A."/>
            <person name="Glavina del Rio T."/>
            <person name="Dalin E."/>
            <person name="Tice H."/>
            <person name="Bruce D."/>
            <person name="Goodwin L."/>
            <person name="Pitluck S."/>
            <person name="Kiss H."/>
            <person name="Brettin T."/>
            <person name="Detter J.C."/>
            <person name="Han C."/>
            <person name="Kuske C.R."/>
            <person name="Schmutz J."/>
            <person name="Larimer F."/>
            <person name="Land M."/>
            <person name="Hauser L."/>
            <person name="Kyrpides N."/>
            <person name="Mikhailova N."/>
            <person name="Ingram L."/>
            <person name="Richardson P."/>
        </authorList>
    </citation>
    <scope>NUCLEOTIDE SEQUENCE [LARGE SCALE GENOMIC DNA]</scope>
    <source>
        <strain>ATCC 8739 / DSM 1576 / NBRC 3972 / NCIMB 8545 / WDCM 00012 / Crooks</strain>
    </source>
</reference>
<organism>
    <name type="scientific">Escherichia coli (strain ATCC 8739 / DSM 1576 / NBRC 3972 / NCIMB 8545 / WDCM 00012 / Crooks)</name>
    <dbReference type="NCBI Taxonomy" id="481805"/>
    <lineage>
        <taxon>Bacteria</taxon>
        <taxon>Pseudomonadati</taxon>
        <taxon>Pseudomonadota</taxon>
        <taxon>Gammaproteobacteria</taxon>
        <taxon>Enterobacterales</taxon>
        <taxon>Enterobacteriaceae</taxon>
        <taxon>Escherichia</taxon>
    </lineage>
</organism>